<proteinExistence type="evidence at protein level"/>
<evidence type="ECO:0000255" key="1">
    <source>
        <dbReference type="PROSITE-ProRule" id="PRU00628"/>
    </source>
</evidence>
<evidence type="ECO:0000269" key="2">
    <source>
    </source>
</evidence>
<evidence type="ECO:0000269" key="3">
    <source>
    </source>
</evidence>
<evidence type="ECO:0000269" key="4">
    <source>
    </source>
</evidence>
<evidence type="ECO:0000305" key="5"/>
<evidence type="ECO:0007829" key="6">
    <source>
        <dbReference type="PDB" id="7Q04"/>
    </source>
</evidence>
<evidence type="ECO:0007829" key="7">
    <source>
        <dbReference type="PDB" id="7Q06"/>
    </source>
</evidence>
<sequence length="413" mass="46243">MQESIIQWHGATNTRVPFGIYTDTANADQEQQRIYRGEVWNYLCLESEIPGAGDFRTTFAGETPIVVVRDADQEIYAFENRCAHRGALIALEKSGRTDSFQCVYHAWSYNRQGDLTGVAFEKGVKGQGGMPASFCKEEHGPRKLRVAVFCGLVFGSFSEDVPSIEDYLGPEICERIERVLHKPVEVIGRFTQKLPNNWKLYFENVKDSYHASLLHMFFTTFELNRLSQKGGVIVDESGGHHVSYSMIDRGAKDDSYKDQAIRSDNERYRLKDPSLLEGFEEFEDGVTLQILSVFPGFVLQQIQNSIAVRQLLPKSISSSELNWTYLGYADDSAEQRKVRLKQANLIGPAGFISMEDGAVGGFVQRGIAGAANLDAVIEMGGDHEGSSEGRATETSVRGFWKAYRKHMGQEMQA</sequence>
<feature type="chain" id="PRO_0000419003" description="Terephthalate 1,2-dioxygenase, terminal oxygenase component subunit alpha 2">
    <location>
        <begin position="1"/>
        <end position="413"/>
    </location>
</feature>
<feature type="domain" description="Rieske" evidence="1">
    <location>
        <begin position="41"/>
        <end position="144"/>
    </location>
</feature>
<feature type="binding site" evidence="1">
    <location>
        <position position="82"/>
    </location>
    <ligand>
        <name>[2Fe-2S] cluster</name>
        <dbReference type="ChEBI" id="CHEBI:190135"/>
    </ligand>
</feature>
<feature type="binding site" evidence="1">
    <location>
        <position position="84"/>
    </location>
    <ligand>
        <name>[2Fe-2S] cluster</name>
        <dbReference type="ChEBI" id="CHEBI:190135"/>
    </ligand>
</feature>
<feature type="binding site" evidence="1">
    <location>
        <position position="102"/>
    </location>
    <ligand>
        <name>[2Fe-2S] cluster</name>
        <dbReference type="ChEBI" id="CHEBI:190135"/>
    </ligand>
</feature>
<feature type="binding site" evidence="1">
    <location>
        <position position="105"/>
    </location>
    <ligand>
        <name>[2Fe-2S] cluster</name>
        <dbReference type="ChEBI" id="CHEBI:190135"/>
    </ligand>
</feature>
<feature type="strand" evidence="7">
    <location>
        <begin position="10"/>
        <end position="17"/>
    </location>
</feature>
<feature type="helix" evidence="7">
    <location>
        <begin position="18"/>
        <end position="21"/>
    </location>
</feature>
<feature type="helix" evidence="7">
    <location>
        <begin position="24"/>
        <end position="33"/>
    </location>
</feature>
<feature type="turn" evidence="7">
    <location>
        <begin position="34"/>
        <end position="37"/>
    </location>
</feature>
<feature type="strand" evidence="7">
    <location>
        <begin position="41"/>
        <end position="45"/>
    </location>
</feature>
<feature type="helix" evidence="7">
    <location>
        <begin position="46"/>
        <end position="48"/>
    </location>
</feature>
<feature type="strand" evidence="7">
    <location>
        <begin position="54"/>
        <end position="60"/>
    </location>
</feature>
<feature type="strand" evidence="7">
    <location>
        <begin position="63"/>
        <end position="69"/>
    </location>
</feature>
<feature type="strand" evidence="7">
    <location>
        <begin position="75"/>
        <end position="80"/>
    </location>
</feature>
<feature type="turn" evidence="7">
    <location>
        <begin position="83"/>
        <end position="85"/>
    </location>
</feature>
<feature type="strand" evidence="7">
    <location>
        <begin position="92"/>
        <end position="96"/>
    </location>
</feature>
<feature type="strand" evidence="7">
    <location>
        <begin position="98"/>
        <end position="101"/>
    </location>
</feature>
<feature type="turn" evidence="7">
    <location>
        <begin position="103"/>
        <end position="105"/>
    </location>
</feature>
<feature type="strand" evidence="7">
    <location>
        <begin position="115"/>
        <end position="117"/>
    </location>
</feature>
<feature type="turn" evidence="7">
    <location>
        <begin position="119"/>
        <end position="122"/>
    </location>
</feature>
<feature type="strand" evidence="6">
    <location>
        <begin position="124"/>
        <end position="126"/>
    </location>
</feature>
<feature type="helix" evidence="7">
    <location>
        <begin position="136"/>
        <end position="138"/>
    </location>
</feature>
<feature type="strand" evidence="7">
    <location>
        <begin position="143"/>
        <end position="149"/>
    </location>
</feature>
<feature type="strand" evidence="7">
    <location>
        <begin position="152"/>
        <end position="157"/>
    </location>
</feature>
<feature type="strand" evidence="7">
    <location>
        <begin position="159"/>
        <end position="161"/>
    </location>
</feature>
<feature type="helix" evidence="7">
    <location>
        <begin position="164"/>
        <end position="168"/>
    </location>
</feature>
<feature type="helix" evidence="7">
    <location>
        <begin position="170"/>
        <end position="179"/>
    </location>
</feature>
<feature type="strand" evidence="7">
    <location>
        <begin position="180"/>
        <end position="182"/>
    </location>
</feature>
<feature type="strand" evidence="7">
    <location>
        <begin position="184"/>
        <end position="196"/>
    </location>
</feature>
<feature type="helix" evidence="7">
    <location>
        <begin position="198"/>
        <end position="205"/>
    </location>
</feature>
<feature type="turn" evidence="7">
    <location>
        <begin position="208"/>
        <end position="210"/>
    </location>
</feature>
<feature type="helix" evidence="7">
    <location>
        <begin position="211"/>
        <end position="214"/>
    </location>
</feature>
<feature type="helix" evidence="7">
    <location>
        <begin position="216"/>
        <end position="220"/>
    </location>
</feature>
<feature type="strand" evidence="7">
    <location>
        <begin position="228"/>
        <end position="234"/>
    </location>
</feature>
<feature type="strand" evidence="7">
    <location>
        <begin position="241"/>
        <end position="246"/>
    </location>
</feature>
<feature type="helix" evidence="7">
    <location>
        <begin position="273"/>
        <end position="276"/>
    </location>
</feature>
<feature type="strand" evidence="6">
    <location>
        <begin position="282"/>
        <end position="284"/>
    </location>
</feature>
<feature type="strand" evidence="7">
    <location>
        <begin position="286"/>
        <end position="293"/>
    </location>
</feature>
<feature type="turn" evidence="7">
    <location>
        <begin position="294"/>
        <end position="296"/>
    </location>
</feature>
<feature type="strand" evidence="7">
    <location>
        <begin position="297"/>
        <end position="302"/>
    </location>
</feature>
<feature type="strand" evidence="7">
    <location>
        <begin position="305"/>
        <end position="315"/>
    </location>
</feature>
<feature type="strand" evidence="7">
    <location>
        <begin position="318"/>
        <end position="328"/>
    </location>
</feature>
<feature type="helix" evidence="7">
    <location>
        <begin position="333"/>
        <end position="342"/>
    </location>
</feature>
<feature type="helix" evidence="7">
    <location>
        <begin position="343"/>
        <end position="345"/>
    </location>
</feature>
<feature type="helix" evidence="7">
    <location>
        <begin position="353"/>
        <end position="366"/>
    </location>
</feature>
<feature type="turn" evidence="7">
    <location>
        <begin position="367"/>
        <end position="369"/>
    </location>
</feature>
<feature type="strand" evidence="7">
    <location>
        <begin position="373"/>
        <end position="376"/>
    </location>
</feature>
<feature type="turn" evidence="7">
    <location>
        <begin position="379"/>
        <end position="382"/>
    </location>
</feature>
<feature type="strand" evidence="7">
    <location>
        <begin position="387"/>
        <end position="391"/>
    </location>
</feature>
<feature type="helix" evidence="7">
    <location>
        <begin position="394"/>
        <end position="407"/>
    </location>
</feature>
<protein>
    <recommendedName>
        <fullName>Terephthalate 1,2-dioxygenase, terminal oxygenase component subunit alpha 2</fullName>
        <shortName>TPADO terminal oxygenase component</shortName>
        <ecNumber evidence="3">1.14.12.15</ecNumber>
    </recommendedName>
    <alternativeName>
        <fullName>TER dioxygenase system</fullName>
        <shortName>TERDOS</shortName>
    </alternativeName>
    <alternativeName>
        <fullName>Terephthalate 1,2-dioxygenase large subunit 2</fullName>
    </alternativeName>
</protein>
<keyword id="KW-0001">2Fe-2S</keyword>
<keyword id="KW-0002">3D-structure</keyword>
<keyword id="KW-0223">Dioxygenase</keyword>
<keyword id="KW-0903">Direct protein sequencing</keyword>
<keyword id="KW-0408">Iron</keyword>
<keyword id="KW-0411">Iron-sulfur</keyword>
<keyword id="KW-0479">Metal-binding</keyword>
<keyword id="KW-0520">NAD</keyword>
<keyword id="KW-0560">Oxidoreductase</keyword>
<accession>Q3C1D5</accession>
<dbReference type="EC" id="1.14.12.15" evidence="3"/>
<dbReference type="EMBL" id="AB238679">
    <property type="protein sequence ID" value="BAE47085.1"/>
    <property type="molecule type" value="Genomic_DNA"/>
</dbReference>
<dbReference type="RefSeq" id="WP_019043843.1">
    <property type="nucleotide sequence ID" value="NZ_SPET01000024.1"/>
</dbReference>
<dbReference type="PDB" id="7Q04">
    <property type="method" value="X-ray"/>
    <property type="resolution" value="2.28 A"/>
    <property type="chains" value="D/E/F=1-413"/>
</dbReference>
<dbReference type="PDB" id="7Q05">
    <property type="method" value="X-ray"/>
    <property type="resolution" value="2.08 A"/>
    <property type="chains" value="D/E/F=1-413"/>
</dbReference>
<dbReference type="PDB" id="7Q06">
    <property type="method" value="X-ray"/>
    <property type="resolution" value="1.95 A"/>
    <property type="chains" value="D/E/F=1-413"/>
</dbReference>
<dbReference type="PDBsum" id="7Q04"/>
<dbReference type="PDBsum" id="7Q05"/>
<dbReference type="PDBsum" id="7Q06"/>
<dbReference type="SMR" id="Q3C1D5"/>
<dbReference type="GO" id="GO:0051537">
    <property type="term" value="F:2 iron, 2 sulfur cluster binding"/>
    <property type="evidence" value="ECO:0007669"/>
    <property type="project" value="UniProtKB-KW"/>
</dbReference>
<dbReference type="GO" id="GO:0005506">
    <property type="term" value="F:iron ion binding"/>
    <property type="evidence" value="ECO:0000314"/>
    <property type="project" value="UniProtKB"/>
</dbReference>
<dbReference type="GO" id="GO:0018628">
    <property type="term" value="F:terephthalate 1,2-dioxygenase activity"/>
    <property type="evidence" value="ECO:0000314"/>
    <property type="project" value="UniProtKB"/>
</dbReference>
<dbReference type="GO" id="GO:0018963">
    <property type="term" value="P:phthalate metabolic process"/>
    <property type="evidence" value="ECO:0000314"/>
    <property type="project" value="UniProtKB"/>
</dbReference>
<dbReference type="CDD" id="cd08880">
    <property type="entry name" value="RHO_alpha_C_ahdA1c-like"/>
    <property type="match status" value="1"/>
</dbReference>
<dbReference type="Gene3D" id="3.90.380.10">
    <property type="entry name" value="Naphthalene 1,2-dioxygenase Alpha Subunit, Chain A, domain 1"/>
    <property type="match status" value="1"/>
</dbReference>
<dbReference type="Gene3D" id="2.102.10.10">
    <property type="entry name" value="Rieske [2Fe-2S] iron-sulphur domain"/>
    <property type="match status" value="1"/>
</dbReference>
<dbReference type="InterPro" id="IPR043264">
    <property type="entry name" value="AhdA1c-like_alpha_C"/>
</dbReference>
<dbReference type="InterPro" id="IPR017941">
    <property type="entry name" value="Rieske_2Fe-2S"/>
</dbReference>
<dbReference type="InterPro" id="IPR036922">
    <property type="entry name" value="Rieske_2Fe-2S_sf"/>
</dbReference>
<dbReference type="InterPro" id="IPR015881">
    <property type="entry name" value="Ring-hydroxy_dOase_2Fe2S_BS"/>
</dbReference>
<dbReference type="InterPro" id="IPR015879">
    <property type="entry name" value="Ring_hydroxy_dOase_asu_C_dom"/>
</dbReference>
<dbReference type="InterPro" id="IPR001663">
    <property type="entry name" value="Rng_hydr_dOase-A"/>
</dbReference>
<dbReference type="PANTHER" id="PTHR43756">
    <property type="entry name" value="CHOLINE MONOOXYGENASE, CHLOROPLASTIC"/>
    <property type="match status" value="1"/>
</dbReference>
<dbReference type="PANTHER" id="PTHR43756:SF5">
    <property type="entry name" value="CHOLINE MONOOXYGENASE, CHLOROPLASTIC"/>
    <property type="match status" value="1"/>
</dbReference>
<dbReference type="Pfam" id="PF00355">
    <property type="entry name" value="Rieske"/>
    <property type="match status" value="1"/>
</dbReference>
<dbReference type="Pfam" id="PF00848">
    <property type="entry name" value="Ring_hydroxyl_A"/>
    <property type="match status" value="1"/>
</dbReference>
<dbReference type="PRINTS" id="PR00090">
    <property type="entry name" value="RNGDIOXGNASE"/>
</dbReference>
<dbReference type="SUPFAM" id="SSF55961">
    <property type="entry name" value="Bet v1-like"/>
    <property type="match status" value="1"/>
</dbReference>
<dbReference type="SUPFAM" id="SSF50022">
    <property type="entry name" value="ISP domain"/>
    <property type="match status" value="1"/>
</dbReference>
<dbReference type="PROSITE" id="PS51296">
    <property type="entry name" value="RIESKE"/>
    <property type="match status" value="1"/>
</dbReference>
<dbReference type="PROSITE" id="PS00570">
    <property type="entry name" value="RING_HYDROXYL_ALPHA"/>
    <property type="match status" value="1"/>
</dbReference>
<reference key="1">
    <citation type="journal article" date="2006" name="Appl. Environ. Microbiol.">
        <title>Characterization of the terephthalate degradation genes of Comamonas sp. strain E6.</title>
        <authorList>
            <person name="Sasoh M."/>
            <person name="Masai E."/>
            <person name="Ishibashi S."/>
            <person name="Hara H."/>
            <person name="Kamimura N."/>
            <person name="Miyauchi K."/>
            <person name="Fukuda M."/>
        </authorList>
    </citation>
    <scope>NUCLEOTIDE SEQUENCE [GENOMIC DNA]</scope>
    <scope>FUNCTION AS A TEREPHTHALATE DIOXYGENASE AND IN TPA DEGRADATION</scope>
    <scope>DISRUPTION PHENOTYPE</scope>
    <source>
        <strain>E6</strain>
    </source>
</reference>
<reference key="2">
    <citation type="journal article" date="1994" name="J. Bacteriol.">
        <title>Terephthalate 1,2-dioxygenase system from Comamonas testosteroni T-2: purification and some properties of the oxygenase component.</title>
        <authorList>
            <person name="Schlafli H.R."/>
            <person name="Weiss M.A."/>
            <person name="Leisinger T."/>
            <person name="Cook A.M."/>
        </authorList>
    </citation>
    <scope>PROTEIN SEQUENCE OF 1-17</scope>
    <scope>FUNCTION AS A TEREPHTHALATE DIOXYGENASE</scope>
    <scope>SUBSTRATE SPECIFICITY</scope>
    <scope>COFACTOR</scope>
    <scope>SUBUNIT</scope>
    <source>
        <strain>E6</strain>
    </source>
</reference>
<reference key="3">
    <citation type="journal article" date="2008" name="Biosci. Biotechnol. Biochem.">
        <title>Enzymatic properties of terephthalate 1,2-dioxygenase of Comamonas sp. strain E6.</title>
        <authorList>
            <person name="Fukuhara Y."/>
            <person name="Kasai D."/>
            <person name="Katayama Y."/>
            <person name="Fukuda M."/>
            <person name="Masai E."/>
        </authorList>
    </citation>
    <scope>FUNCTION AS A TEREPHTHALATE DIOXYGENASE</scope>
    <scope>CATALYTIC ACTIVITY</scope>
    <scope>BIOPHYSICOCHEMICAL PROPERTIES</scope>
    <scope>COFACTOR</scope>
    <scope>ACTIVITY REGULATION</scope>
    <scope>SUBUNIT</scope>
    <scope>SUBSTRATE SPECIFICITY</scope>
    <source>
        <strain>E6</strain>
    </source>
</reference>
<gene>
    <name type="primary">tphA2II</name>
</gene>
<comment type="function">
    <text evidence="2 3 4">Component of the terephthalate 1,2-dioxygenase multicomponent enzyme system which catalyzes the dioxygenation of terephthalate (TER/TPA) to 1,2-dihydroxy-3,5-cyclohexadiene-1,4-dicarboxylic acid (DCD). It can also use 2,5-dicarboxypyridine (PDC) and 1,4-napthalenedicarboxylic acid (NDC) as substrates, and preferentially uses NADPH which is the physiological electron donor.</text>
</comment>
<comment type="catalytic activity">
    <reaction evidence="3">
        <text>terephthalate + NADH + O2 + H(+) = (3S,4R)-3,4-dihydroxycyclohexa-1,5-diene-1,4-dicarboxylate + NAD(+)</text>
        <dbReference type="Rhea" id="RHEA:10312"/>
        <dbReference type="ChEBI" id="CHEBI:15378"/>
        <dbReference type="ChEBI" id="CHEBI:15379"/>
        <dbReference type="ChEBI" id="CHEBI:30043"/>
        <dbReference type="ChEBI" id="CHEBI:57412"/>
        <dbReference type="ChEBI" id="CHEBI:57540"/>
        <dbReference type="ChEBI" id="CHEBI:57945"/>
        <dbReference type="EC" id="1.14.12.15"/>
    </reaction>
</comment>
<comment type="cofactor">
    <cofactor evidence="3 4">
        <name>Fe cation</name>
        <dbReference type="ChEBI" id="CHEBI:24875"/>
    </cofactor>
</comment>
<comment type="cofactor">
    <cofactor evidence="1">
        <name>[2Fe-2S] cluster</name>
        <dbReference type="ChEBI" id="CHEBI:190135"/>
    </cofactor>
    <text evidence="1">Binds 1 [2Fe-2S] cluster per subunit.</text>
</comment>
<comment type="activity regulation">
    <text evidence="3">Inhibited by EDTA.</text>
</comment>
<comment type="biophysicochemical properties">
    <kinetics>
        <KM evidence="3">72 uM for TPA (at 30 degrees Celsius and at ph 7)</KM>
        <Vmax evidence="3">9.87 umol/min/mg enzyme with TPA as substrate (at 30 degrees Celsius and at ph 7)</Vmax>
    </kinetics>
    <phDependence>
        <text evidence="3">Optimum pH is 7. About 20% of maximum TPADO activity is observed at pH 9, whereas no activity is observed at pH 5.</text>
    </phDependence>
    <temperatureDependence>
        <text evidence="3">Optimum temperature is 30 degrees Celsius. Approximately 60% of maximum TPADO activity is observed at 15 degrees Celsius, and activity is completely lost at 50 degrees Celsius.</text>
    </temperatureDependence>
</comment>
<comment type="subunit">
    <text evidence="3 4">Heterotetramer composed of 2 alpha (TphA2I and TphA2II) and 2 beta (TphA3I and TphA3II) subunits. Part of a multicomponent enzyme system composed of a reductase (TphA1I or TphA1II) and a two-subunit oxygenase component (TphA2I or TphA2II and TphA3I or TphA3II).</text>
</comment>
<comment type="disruption phenotype">
    <text evidence="2">Not affected by disruption of tphA2II, however the tphA2I/tphA2II double mutant no longer grows on TPA.</text>
</comment>
<comment type="similarity">
    <text evidence="5">Belongs to the bacterial ring-hydroxylating dioxygenase alpha subunit family.</text>
</comment>
<organism>
    <name type="scientific">Comamonas sp</name>
    <dbReference type="NCBI Taxonomy" id="34028"/>
    <lineage>
        <taxon>Bacteria</taxon>
        <taxon>Pseudomonadati</taxon>
        <taxon>Pseudomonadota</taxon>
        <taxon>Betaproteobacteria</taxon>
        <taxon>Burkholderiales</taxon>
        <taxon>Comamonadaceae</taxon>
        <taxon>Comamonas</taxon>
    </lineage>
</organism>
<name>TPDA2_COMSP</name>